<sequence length="283" mass="32573">MRQYLDLCQRIVDQGVWVENERTGKRCLTVINADLTYDVGNNQFPLVTTRKSFWKAAVAELLGYIRGYDNAADFRQLGTKTWDANANLNQAWLNNPYRKGEDDMGRVYGVQGRAWAKPDGGHIDQLKKIVDDLSRGVDDRGEILNFYNPGEFHMGCLRPCMYSHHFSLLGDTLYLNSTQRSCDVPLGLNFNMVQVYVFLALMAQITGKKPGLAYHKIVNAHIYQDQLELMRDVQLKREPFPAPQFHINPKIKTLQDLETWVTLDDFDVTGYQFHDPIQYPFSV</sequence>
<comment type="function">
    <text evidence="1">Catalyzes the reductive methylation of 2'-deoxyuridine-5'-monophosphate (dUMP) to 2'-deoxythymidine-5'-monophosphate (dTMP) while utilizing 5,10-methylenetetrahydrofolate (mTHF) as the methyl donor and reductant in the reaction, yielding dihydrofolate (DHF) as a by-product. This enzymatic reaction provides an intracellular de novo source of dTMP, an essential precursor for DNA biosynthesis.</text>
</comment>
<comment type="catalytic activity">
    <reaction evidence="1">
        <text>dUMP + (6R)-5,10-methylene-5,6,7,8-tetrahydrofolate = 7,8-dihydrofolate + dTMP</text>
        <dbReference type="Rhea" id="RHEA:12104"/>
        <dbReference type="ChEBI" id="CHEBI:15636"/>
        <dbReference type="ChEBI" id="CHEBI:57451"/>
        <dbReference type="ChEBI" id="CHEBI:63528"/>
        <dbReference type="ChEBI" id="CHEBI:246422"/>
        <dbReference type="EC" id="2.1.1.45"/>
    </reaction>
</comment>
<comment type="pathway">
    <text evidence="1">Pyrimidine metabolism; dTTP biosynthesis.</text>
</comment>
<comment type="subunit">
    <text evidence="1">Homodimer.</text>
</comment>
<comment type="subcellular location">
    <subcellularLocation>
        <location evidence="1">Cytoplasm</location>
    </subcellularLocation>
</comment>
<comment type="similarity">
    <text evidence="1">Belongs to the thymidylate synthase family. Bacterial-type ThyA subfamily.</text>
</comment>
<reference key="1">
    <citation type="submission" date="1998-04" db="EMBL/GenBank/DDBJ databases">
        <authorList>
            <person name="Valle E."/>
            <person name="Silva A."/>
            <person name="Benitez J.A."/>
        </authorList>
    </citation>
    <scope>NUCLEOTIDE SEQUENCE [GENOMIC DNA]</scope>
    <source>
        <strain>El Tor C7258 / Serotype O1</strain>
    </source>
</reference>
<reference key="2">
    <citation type="submission" date="1998-05" db="EMBL/GenBank/DDBJ databases">
        <title>Characterisation of the lgt/thyA locus from Vibrio cholerae.</title>
        <authorList>
            <person name="Carlin N.I.A."/>
            <person name="Nilsson A."/>
            <person name="Todorovic M."/>
            <person name="Holmgren J."/>
            <person name="Lebens M."/>
        </authorList>
    </citation>
    <scope>NUCLEOTIDE SEQUENCE [GENOMIC DNA]</scope>
    <source>
        <strain>JS1569</strain>
    </source>
</reference>
<reference key="3">
    <citation type="submission" date="2002-08" db="EMBL/GenBank/DDBJ databases">
        <authorList>
            <person name="Xia X."/>
        </authorList>
    </citation>
    <scope>NUCLEOTIDE SEQUENCE [GENOMIC DNA]</scope>
    <scope>VARIANT TRP-187</scope>
</reference>
<reference key="4">
    <citation type="journal article" date="2000" name="Nature">
        <title>DNA sequence of both chromosomes of the cholera pathogen Vibrio cholerae.</title>
        <authorList>
            <person name="Heidelberg J.F."/>
            <person name="Eisen J.A."/>
            <person name="Nelson W.C."/>
            <person name="Clayton R.A."/>
            <person name="Gwinn M.L."/>
            <person name="Dodson R.J."/>
            <person name="Haft D.H."/>
            <person name="Hickey E.K."/>
            <person name="Peterson J.D."/>
            <person name="Umayam L.A."/>
            <person name="Gill S.R."/>
            <person name="Nelson K.E."/>
            <person name="Read T.D."/>
            <person name="Tettelin H."/>
            <person name="Richardson D.L."/>
            <person name="Ermolaeva M.D."/>
            <person name="Vamathevan J.J."/>
            <person name="Bass S."/>
            <person name="Qin H."/>
            <person name="Dragoi I."/>
            <person name="Sellers P."/>
            <person name="McDonald L.A."/>
            <person name="Utterback T.R."/>
            <person name="Fleischmann R.D."/>
            <person name="Nierman W.C."/>
            <person name="White O."/>
            <person name="Salzberg S.L."/>
            <person name="Smith H.O."/>
            <person name="Colwell R.R."/>
            <person name="Mekalanos J.J."/>
            <person name="Venter J.C."/>
            <person name="Fraser C.M."/>
        </authorList>
    </citation>
    <scope>NUCLEOTIDE SEQUENCE [LARGE SCALE GENOMIC DNA]</scope>
    <source>
        <strain>ATCC 39315 / El Tor Inaba N16961</strain>
    </source>
</reference>
<feature type="chain" id="PRO_0000141039" description="Thymidylate synthase">
    <location>
        <begin position="1"/>
        <end position="283"/>
    </location>
</feature>
<feature type="active site" description="Nucleophile" evidence="1">
    <location>
        <position position="160"/>
    </location>
</feature>
<feature type="binding site" evidence="1">
    <location>
        <position position="22"/>
    </location>
    <ligand>
        <name>dUMP</name>
        <dbReference type="ChEBI" id="CHEBI:246422"/>
    </ligand>
</feature>
<feature type="binding site" evidence="1">
    <location>
        <begin position="180"/>
        <end position="183"/>
    </location>
    <ligand>
        <name>dUMP</name>
        <dbReference type="ChEBI" id="CHEBI:246422"/>
    </ligand>
</feature>
<feature type="binding site" evidence="1">
    <location>
        <position position="183"/>
    </location>
    <ligand>
        <name>(6R)-5,10-methylene-5,6,7,8-tetrahydrofolate</name>
        <dbReference type="ChEBI" id="CHEBI:15636"/>
    </ligand>
</feature>
<feature type="binding site" evidence="1">
    <location>
        <position position="191"/>
    </location>
    <ligand>
        <name>dUMP</name>
        <dbReference type="ChEBI" id="CHEBI:246422"/>
    </ligand>
</feature>
<feature type="binding site" evidence="1">
    <location>
        <begin position="221"/>
        <end position="223"/>
    </location>
    <ligand>
        <name>dUMP</name>
        <dbReference type="ChEBI" id="CHEBI:246422"/>
    </ligand>
</feature>
<feature type="binding site" evidence="1">
    <location>
        <position position="282"/>
    </location>
    <ligand>
        <name>(6R)-5,10-methylene-5,6,7,8-tetrahydrofolate</name>
        <dbReference type="ChEBI" id="CHEBI:15636"/>
    </ligand>
</feature>
<feature type="sequence variant" description="In inactive enzyme." evidence="2">
    <original>G</original>
    <variation>W</variation>
    <location>
        <position position="187"/>
    </location>
</feature>
<feature type="sequence conflict" description="In Ref. 2; CAA07073." evidence="3" ref="2">
    <original>R</original>
    <variation>K</variation>
    <location>
        <position position="2"/>
    </location>
</feature>
<gene>
    <name evidence="1" type="primary">thyA</name>
    <name type="ordered locus">VC_0675</name>
</gene>
<evidence type="ECO:0000255" key="1">
    <source>
        <dbReference type="HAMAP-Rule" id="MF_00008"/>
    </source>
</evidence>
<evidence type="ECO:0000269" key="2">
    <source ref="3"/>
</evidence>
<evidence type="ECO:0000305" key="3"/>
<keyword id="KW-0963">Cytoplasm</keyword>
<keyword id="KW-0489">Methyltransferase</keyword>
<keyword id="KW-0545">Nucleotide biosynthesis</keyword>
<keyword id="KW-1185">Reference proteome</keyword>
<keyword id="KW-0808">Transferase</keyword>
<name>TYSY_VIBCH</name>
<accession>O66108</accession>
<accession>O87078</accession>
<accession>Q8GKX5</accession>
<accession>Q9JQ12</accession>
<dbReference type="EC" id="2.1.1.45" evidence="1"/>
<dbReference type="EMBL" id="Y17135">
    <property type="protein sequence ID" value="CAA76645.1"/>
    <property type="molecule type" value="Genomic_DNA"/>
</dbReference>
<dbReference type="EMBL" id="AJ006514">
    <property type="protein sequence ID" value="CAA07073.1"/>
    <property type="molecule type" value="Genomic_DNA"/>
</dbReference>
<dbReference type="EMBL" id="AY143429">
    <property type="protein sequence ID" value="AAN16904.1"/>
    <property type="molecule type" value="Genomic_DNA"/>
</dbReference>
<dbReference type="EMBL" id="AE003852">
    <property type="protein sequence ID" value="AAF93840.1"/>
    <property type="molecule type" value="Genomic_DNA"/>
</dbReference>
<dbReference type="PIR" id="C82295">
    <property type="entry name" value="C82295"/>
</dbReference>
<dbReference type="RefSeq" id="NP_230324.1">
    <property type="nucleotide sequence ID" value="NC_002505.1"/>
</dbReference>
<dbReference type="RefSeq" id="WP_001250353.1">
    <property type="nucleotide sequence ID" value="NZ_LT906614.1"/>
</dbReference>
<dbReference type="SMR" id="O66108"/>
<dbReference type="STRING" id="243277.VC_0675"/>
<dbReference type="DNASU" id="2615464"/>
<dbReference type="EnsemblBacteria" id="AAF93840">
    <property type="protein sequence ID" value="AAF93840"/>
    <property type="gene ID" value="VC_0675"/>
</dbReference>
<dbReference type="KEGG" id="vch:VC_0675"/>
<dbReference type="PATRIC" id="fig|243277.26.peg.647"/>
<dbReference type="eggNOG" id="COG0207">
    <property type="taxonomic scope" value="Bacteria"/>
</dbReference>
<dbReference type="HOGENOM" id="CLU_021669_0_1_6"/>
<dbReference type="UniPathway" id="UPA00575"/>
<dbReference type="Proteomes" id="UP000000584">
    <property type="component" value="Chromosome 1"/>
</dbReference>
<dbReference type="GO" id="GO:0005829">
    <property type="term" value="C:cytosol"/>
    <property type="evidence" value="ECO:0000318"/>
    <property type="project" value="GO_Central"/>
</dbReference>
<dbReference type="GO" id="GO:0004799">
    <property type="term" value="F:thymidylate synthase activity"/>
    <property type="evidence" value="ECO:0000318"/>
    <property type="project" value="GO_Central"/>
</dbReference>
<dbReference type="GO" id="GO:0006231">
    <property type="term" value="P:dTMP biosynthetic process"/>
    <property type="evidence" value="ECO:0000318"/>
    <property type="project" value="GO_Central"/>
</dbReference>
<dbReference type="GO" id="GO:0006235">
    <property type="term" value="P:dTTP biosynthetic process"/>
    <property type="evidence" value="ECO:0007669"/>
    <property type="project" value="UniProtKB-UniRule"/>
</dbReference>
<dbReference type="GO" id="GO:0032259">
    <property type="term" value="P:methylation"/>
    <property type="evidence" value="ECO:0007669"/>
    <property type="project" value="UniProtKB-KW"/>
</dbReference>
<dbReference type="CDD" id="cd00351">
    <property type="entry name" value="TS_Pyrimidine_HMase"/>
    <property type="match status" value="1"/>
</dbReference>
<dbReference type="FunFam" id="3.30.572.10:FF:000003">
    <property type="entry name" value="Thymidylate synthase"/>
    <property type="match status" value="1"/>
</dbReference>
<dbReference type="Gene3D" id="3.30.572.10">
    <property type="entry name" value="Thymidylate synthase/dCMP hydroxymethylase domain"/>
    <property type="match status" value="1"/>
</dbReference>
<dbReference type="HAMAP" id="MF_00008">
    <property type="entry name" value="Thymidy_synth_bact"/>
    <property type="match status" value="1"/>
</dbReference>
<dbReference type="InterPro" id="IPR045097">
    <property type="entry name" value="Thymidate_synth/dCMP_Mease"/>
</dbReference>
<dbReference type="InterPro" id="IPR023451">
    <property type="entry name" value="Thymidate_synth/dCMP_Mease_dom"/>
</dbReference>
<dbReference type="InterPro" id="IPR036926">
    <property type="entry name" value="Thymidate_synth/dCMP_Mease_sf"/>
</dbReference>
<dbReference type="InterPro" id="IPR000398">
    <property type="entry name" value="Thymidylate_synthase"/>
</dbReference>
<dbReference type="InterPro" id="IPR020940">
    <property type="entry name" value="Thymidylate_synthase_AS"/>
</dbReference>
<dbReference type="NCBIfam" id="NF002498">
    <property type="entry name" value="PRK01827.1-4"/>
    <property type="match status" value="1"/>
</dbReference>
<dbReference type="NCBIfam" id="TIGR03284">
    <property type="entry name" value="thym_sym"/>
    <property type="match status" value="1"/>
</dbReference>
<dbReference type="PANTHER" id="PTHR11548:SF9">
    <property type="entry name" value="THYMIDYLATE SYNTHASE"/>
    <property type="match status" value="1"/>
</dbReference>
<dbReference type="PANTHER" id="PTHR11548">
    <property type="entry name" value="THYMIDYLATE SYNTHASE 1"/>
    <property type="match status" value="1"/>
</dbReference>
<dbReference type="Pfam" id="PF00303">
    <property type="entry name" value="Thymidylat_synt"/>
    <property type="match status" value="1"/>
</dbReference>
<dbReference type="PRINTS" id="PR00108">
    <property type="entry name" value="THYMDSNTHASE"/>
</dbReference>
<dbReference type="SUPFAM" id="SSF55831">
    <property type="entry name" value="Thymidylate synthase/dCMP hydroxymethylase"/>
    <property type="match status" value="1"/>
</dbReference>
<dbReference type="PROSITE" id="PS00091">
    <property type="entry name" value="THYMIDYLATE_SYNTHASE"/>
    <property type="match status" value="1"/>
</dbReference>
<organism>
    <name type="scientific">Vibrio cholerae serotype O1 (strain ATCC 39315 / El Tor Inaba N16961)</name>
    <dbReference type="NCBI Taxonomy" id="243277"/>
    <lineage>
        <taxon>Bacteria</taxon>
        <taxon>Pseudomonadati</taxon>
        <taxon>Pseudomonadota</taxon>
        <taxon>Gammaproteobacteria</taxon>
        <taxon>Vibrionales</taxon>
        <taxon>Vibrionaceae</taxon>
        <taxon>Vibrio</taxon>
    </lineage>
</organism>
<proteinExistence type="inferred from homology"/>
<protein>
    <recommendedName>
        <fullName evidence="1">Thymidylate synthase</fullName>
        <shortName evidence="1">TS</shortName>
        <shortName evidence="1">TSase</shortName>
        <ecNumber evidence="1">2.1.1.45</ecNumber>
    </recommendedName>
</protein>